<comment type="function">
    <text evidence="2">Catalyzes the phosphorylation of hexose, such as D-glucose and D-fructose, to hexose 6-phosphate (D-glucose 6-phosphate and D-fructose 6-phosphate, respectively). Mediates the initial step of glycolysis by catalyzing phosphorylation of D-glucose to D-glucose 6-phosphate.</text>
</comment>
<comment type="catalytic activity">
    <reaction evidence="2">
        <text>a D-hexose + ATP = a D-hexose 6-phosphate + ADP + H(+)</text>
        <dbReference type="Rhea" id="RHEA:22740"/>
        <dbReference type="ChEBI" id="CHEBI:4194"/>
        <dbReference type="ChEBI" id="CHEBI:15378"/>
        <dbReference type="ChEBI" id="CHEBI:30616"/>
        <dbReference type="ChEBI" id="CHEBI:229467"/>
        <dbReference type="ChEBI" id="CHEBI:456216"/>
        <dbReference type="EC" id="2.7.1.1"/>
    </reaction>
    <physiologicalReaction direction="left-to-right" evidence="2">
        <dbReference type="Rhea" id="RHEA:22741"/>
    </physiologicalReaction>
</comment>
<comment type="catalytic activity">
    <reaction evidence="2">
        <text>D-fructose + ATP = D-fructose 6-phosphate + ADP + H(+)</text>
        <dbReference type="Rhea" id="RHEA:16125"/>
        <dbReference type="ChEBI" id="CHEBI:15378"/>
        <dbReference type="ChEBI" id="CHEBI:30616"/>
        <dbReference type="ChEBI" id="CHEBI:37721"/>
        <dbReference type="ChEBI" id="CHEBI:61527"/>
        <dbReference type="ChEBI" id="CHEBI:456216"/>
        <dbReference type="EC" id="2.7.1.1"/>
    </reaction>
    <physiologicalReaction direction="left-to-right" evidence="2">
        <dbReference type="Rhea" id="RHEA:16126"/>
    </physiologicalReaction>
</comment>
<comment type="catalytic activity">
    <reaction evidence="2">
        <text>D-glucose + ATP = D-glucose 6-phosphate + ADP + H(+)</text>
        <dbReference type="Rhea" id="RHEA:17825"/>
        <dbReference type="ChEBI" id="CHEBI:4167"/>
        <dbReference type="ChEBI" id="CHEBI:15378"/>
        <dbReference type="ChEBI" id="CHEBI:30616"/>
        <dbReference type="ChEBI" id="CHEBI:61548"/>
        <dbReference type="ChEBI" id="CHEBI:456216"/>
        <dbReference type="EC" id="2.7.1.1"/>
    </reaction>
    <physiologicalReaction direction="left-to-right" evidence="2">
        <dbReference type="Rhea" id="RHEA:17826"/>
    </physiologicalReaction>
</comment>
<comment type="activity regulation">
    <text evidence="3">Hexokinase is an allosteric enzyme inhibited by its product D-glucose 6-phosphate.</text>
</comment>
<comment type="pathway">
    <text evidence="2">Carbohydrate metabolism; hexose metabolism.</text>
</comment>
<comment type="pathway">
    <text evidence="2">Carbohydrate degradation; glycolysis; D-glyceraldehyde 3-phosphate and glycerone phosphate from D-glucose: step 1/4.</text>
</comment>
<comment type="domain">
    <text evidence="1">The N- and C-terminal halves of this hexokinase contain a hexokinase domain. The catalytic activity is associated with the C-terminus while regulatory function is associated with the N-terminus.</text>
</comment>
<comment type="similarity">
    <text evidence="4 6">Belongs to the hexokinase family.</text>
</comment>
<gene>
    <name evidence="7" type="primary">Hk3</name>
</gene>
<dbReference type="EC" id="2.7.1.1" evidence="2"/>
<dbReference type="EMBL" id="AK149651">
    <property type="protein sequence ID" value="BAE29007.1"/>
    <property type="molecule type" value="mRNA"/>
</dbReference>
<dbReference type="EMBL" id="AK149992">
    <property type="protein sequence ID" value="BAE29220.1"/>
    <property type="molecule type" value="mRNA"/>
</dbReference>
<dbReference type="EMBL" id="AK154603">
    <property type="protein sequence ID" value="BAE32706.1"/>
    <property type="molecule type" value="mRNA"/>
</dbReference>
<dbReference type="EMBL" id="AK162637">
    <property type="protein sequence ID" value="BAE37000.1"/>
    <property type="molecule type" value="mRNA"/>
</dbReference>
<dbReference type="EMBL" id="AK171580">
    <property type="protein sequence ID" value="BAE42538.1"/>
    <property type="molecule type" value="mRNA"/>
</dbReference>
<dbReference type="CCDS" id="CCDS26538.1"/>
<dbReference type="RefSeq" id="NP_001028417.1">
    <property type="nucleotide sequence ID" value="NM_001033245.4"/>
</dbReference>
<dbReference type="RefSeq" id="NP_001193319.1">
    <property type="nucleotide sequence ID" value="NM_001206390.1"/>
</dbReference>
<dbReference type="SMR" id="Q3TRM8"/>
<dbReference type="BioGRID" id="229281">
    <property type="interactions" value="1"/>
</dbReference>
<dbReference type="FunCoup" id="Q3TRM8">
    <property type="interactions" value="340"/>
</dbReference>
<dbReference type="STRING" id="10090.ENSMUSP00000051215"/>
<dbReference type="iPTMnet" id="Q3TRM8"/>
<dbReference type="PhosphoSitePlus" id="Q3TRM8"/>
<dbReference type="SwissPalm" id="Q3TRM8"/>
<dbReference type="jPOST" id="Q3TRM8"/>
<dbReference type="PaxDb" id="10090-ENSMUSP00000051215"/>
<dbReference type="ProteomicsDB" id="273332"/>
<dbReference type="Antibodypedia" id="29158">
    <property type="antibodies" value="451 antibodies from 35 providers"/>
</dbReference>
<dbReference type="DNASU" id="212032"/>
<dbReference type="Ensembl" id="ENSMUST00000052949.13">
    <property type="protein sequence ID" value="ENSMUSP00000051215.7"/>
    <property type="gene ID" value="ENSMUSG00000025877.15"/>
</dbReference>
<dbReference type="Ensembl" id="ENSMUST00000126234.8">
    <property type="protein sequence ID" value="ENSMUSP00000123233.2"/>
    <property type="gene ID" value="ENSMUSG00000025877.15"/>
</dbReference>
<dbReference type="GeneID" id="212032"/>
<dbReference type="KEGG" id="mmu:212032"/>
<dbReference type="UCSC" id="uc007qpr.2">
    <property type="organism name" value="mouse"/>
</dbReference>
<dbReference type="AGR" id="MGI:2670962"/>
<dbReference type="CTD" id="3101"/>
<dbReference type="MGI" id="MGI:2670962">
    <property type="gene designation" value="Hk3"/>
</dbReference>
<dbReference type="VEuPathDB" id="HostDB:ENSMUSG00000025877"/>
<dbReference type="eggNOG" id="KOG1369">
    <property type="taxonomic scope" value="Eukaryota"/>
</dbReference>
<dbReference type="GeneTree" id="ENSGT00950000182787"/>
<dbReference type="InParanoid" id="Q3TRM8"/>
<dbReference type="OMA" id="VRPCEVG"/>
<dbReference type="OrthoDB" id="419537at2759"/>
<dbReference type="PhylomeDB" id="Q3TRM8"/>
<dbReference type="TreeFam" id="TF314238"/>
<dbReference type="Reactome" id="R-MMU-6798695">
    <property type="pathway name" value="Neutrophil degranulation"/>
</dbReference>
<dbReference type="Reactome" id="R-MMU-70171">
    <property type="pathway name" value="Glycolysis"/>
</dbReference>
<dbReference type="SABIO-RK" id="Q3TRM8"/>
<dbReference type="UniPathway" id="UPA00109">
    <property type="reaction ID" value="UER00180"/>
</dbReference>
<dbReference type="UniPathway" id="UPA00242"/>
<dbReference type="BioGRID-ORCS" id="212032">
    <property type="hits" value="3 hits in 80 CRISPR screens"/>
</dbReference>
<dbReference type="PRO" id="PR:Q3TRM8"/>
<dbReference type="Proteomes" id="UP000000589">
    <property type="component" value="Chromosome 13"/>
</dbReference>
<dbReference type="RNAct" id="Q3TRM8">
    <property type="molecule type" value="protein"/>
</dbReference>
<dbReference type="Bgee" id="ENSMUSG00000025877">
    <property type="expression patterns" value="Expressed in granulocyte and 86 other cell types or tissues"/>
</dbReference>
<dbReference type="ExpressionAtlas" id="Q3TRM8">
    <property type="expression patterns" value="baseline and differential"/>
</dbReference>
<dbReference type="GO" id="GO:0005739">
    <property type="term" value="C:mitochondrion"/>
    <property type="evidence" value="ECO:0007005"/>
    <property type="project" value="MGI"/>
</dbReference>
<dbReference type="GO" id="GO:0005524">
    <property type="term" value="F:ATP binding"/>
    <property type="evidence" value="ECO:0007669"/>
    <property type="project" value="UniProtKB-KW"/>
</dbReference>
<dbReference type="GO" id="GO:0005536">
    <property type="term" value="F:D-glucose binding"/>
    <property type="evidence" value="ECO:0007669"/>
    <property type="project" value="InterPro"/>
</dbReference>
<dbReference type="GO" id="GO:0008865">
    <property type="term" value="F:fructokinase activity"/>
    <property type="evidence" value="ECO:0000250"/>
    <property type="project" value="UniProtKB"/>
</dbReference>
<dbReference type="GO" id="GO:0004340">
    <property type="term" value="F:glucokinase activity"/>
    <property type="evidence" value="ECO:0000250"/>
    <property type="project" value="UniProtKB"/>
</dbReference>
<dbReference type="GO" id="GO:0004396">
    <property type="term" value="F:hexokinase activity"/>
    <property type="evidence" value="ECO:0000266"/>
    <property type="project" value="MGI"/>
</dbReference>
<dbReference type="GO" id="GO:0006002">
    <property type="term" value="P:fructose 6-phosphate metabolic process"/>
    <property type="evidence" value="ECO:0000250"/>
    <property type="project" value="UniProtKB"/>
</dbReference>
<dbReference type="GO" id="GO:0051156">
    <property type="term" value="P:glucose 6-phosphate metabolic process"/>
    <property type="evidence" value="ECO:0000250"/>
    <property type="project" value="UniProtKB"/>
</dbReference>
<dbReference type="GO" id="GO:0006096">
    <property type="term" value="P:glycolytic process"/>
    <property type="evidence" value="ECO:0007669"/>
    <property type="project" value="UniProtKB-UniPathway"/>
</dbReference>
<dbReference type="GO" id="GO:0019318">
    <property type="term" value="P:hexose metabolic process"/>
    <property type="evidence" value="ECO:0007669"/>
    <property type="project" value="UniProtKB-UniPathway"/>
</dbReference>
<dbReference type="GO" id="GO:0001678">
    <property type="term" value="P:intracellular glucose homeostasis"/>
    <property type="evidence" value="ECO:0007669"/>
    <property type="project" value="InterPro"/>
</dbReference>
<dbReference type="FunFam" id="3.30.420.40:FF:000015">
    <property type="entry name" value="Hexokinase 1"/>
    <property type="match status" value="1"/>
</dbReference>
<dbReference type="FunFam" id="3.40.367.20:FF:000001">
    <property type="entry name" value="Hexokinase 1"/>
    <property type="match status" value="1"/>
</dbReference>
<dbReference type="FunFam" id="3.30.420.40:FF:000123">
    <property type="entry name" value="Hexokinase 3"/>
    <property type="match status" value="1"/>
</dbReference>
<dbReference type="FunFam" id="3.40.367.20:FF:000005">
    <property type="entry name" value="Phosphotransferase"/>
    <property type="match status" value="1"/>
</dbReference>
<dbReference type="Gene3D" id="3.30.420.40">
    <property type="match status" value="2"/>
</dbReference>
<dbReference type="Gene3D" id="3.40.367.20">
    <property type="match status" value="2"/>
</dbReference>
<dbReference type="InterPro" id="IPR043129">
    <property type="entry name" value="ATPase_NBD"/>
</dbReference>
<dbReference type="InterPro" id="IPR001312">
    <property type="entry name" value="Hexokinase"/>
</dbReference>
<dbReference type="InterPro" id="IPR019807">
    <property type="entry name" value="Hexokinase_BS"/>
</dbReference>
<dbReference type="InterPro" id="IPR022673">
    <property type="entry name" value="Hexokinase_C"/>
</dbReference>
<dbReference type="InterPro" id="IPR022672">
    <property type="entry name" value="Hexokinase_N"/>
</dbReference>
<dbReference type="PANTHER" id="PTHR19443">
    <property type="entry name" value="HEXOKINASE"/>
    <property type="match status" value="1"/>
</dbReference>
<dbReference type="PANTHER" id="PTHR19443:SF1">
    <property type="entry name" value="HEXOKINASE-3"/>
    <property type="match status" value="1"/>
</dbReference>
<dbReference type="Pfam" id="PF00349">
    <property type="entry name" value="Hexokinase_1"/>
    <property type="match status" value="2"/>
</dbReference>
<dbReference type="Pfam" id="PF03727">
    <property type="entry name" value="Hexokinase_2"/>
    <property type="match status" value="2"/>
</dbReference>
<dbReference type="PRINTS" id="PR00475">
    <property type="entry name" value="HEXOKINASE"/>
</dbReference>
<dbReference type="SUPFAM" id="SSF53067">
    <property type="entry name" value="Actin-like ATPase domain"/>
    <property type="match status" value="4"/>
</dbReference>
<dbReference type="PROSITE" id="PS00378">
    <property type="entry name" value="HEXOKINASE_1"/>
    <property type="match status" value="2"/>
</dbReference>
<dbReference type="PROSITE" id="PS51748">
    <property type="entry name" value="HEXOKINASE_2"/>
    <property type="match status" value="2"/>
</dbReference>
<sequence length="922" mass="100101">MATIGPSGLHPGERASVCPHEGVPRPSGSLELECLQQFKVTRTQLQQIQASLLCSMEQALKGQDSPAPSVRMLPTYVRSTPHGTEQGDFLVLELGATGASLRVLWVTLTGTKECRVEPRSREFVIPQEVILGAGQQLFDFAARCLSEFLDAYPVENQGLKLGFNFSFPCHQTGLDRSTLISWTKGFRCSGVEGQDVVQLLRDAIQRQGTYRIDVVAMVNDTVGTMMGCELGTRPCEVGLIVDTGTNACYMEEARHVAALDEDRGRTCVSIEWGSFYDEDALGPVLTTFDSALDRESLTPGAQRFEKMIGGLYLGELVRLVLVHLTQHGVLFDGCASPALLSQGCILLDHVAEMEDTATGTARVHTILQDLGLSPRASDAELVQYVCVAVCTRAAQLCAAALAAVLSRLQHSREQQTLQVAVATGGRVFERHPRFLRILKETVTLLAPNCDVSFIPSVDGGGRGVAMVTAVAARLAAHRRILEETLAPFQLTLEQMTVVQAQMREAMIRGLQGEASSLRMLPTYVRATPDGSERGDFLALDLGGTNFRVLLVRVAEGSVQIINQVYSIPECRAQGSGQKLFDHIVDCIVDFQKRQGLSGQSLPLGFTFSFPCKQLGLDQGILLNWTKGFNASGCEGQDVVYLLREAIRRRQAVELNVVAIVNDTVGTMMSCGYDDPRCEMGLIVGTGTNACYMEELRNVASVPGDSGLMCINMEWGAFGDDGSLGTLSTRFDTSVDQASINPGKQRFEKMISGMYLGEIVRHILLHLTNLGVLFRGQKTQCLQARDIFKTKFLSEIESDSLALRQVRAILEDLGLTLTSDDALMVLEVCQAVSRRAAQLCGAGVAAVVEKIRENRGLQELTVSVGVDGTLYKLHPHFSKLVSATVRKLAPQCTVTFLQSEDGSGKGAALVTAVACRLTQMAHV</sequence>
<name>HXK3_MOUSE</name>
<reference key="1">
    <citation type="journal article" date="2005" name="Science">
        <title>The transcriptional landscape of the mammalian genome.</title>
        <authorList>
            <person name="Carninci P."/>
            <person name="Kasukawa T."/>
            <person name="Katayama S."/>
            <person name="Gough J."/>
            <person name="Frith M.C."/>
            <person name="Maeda N."/>
            <person name="Oyama R."/>
            <person name="Ravasi T."/>
            <person name="Lenhard B."/>
            <person name="Wells C."/>
            <person name="Kodzius R."/>
            <person name="Shimokawa K."/>
            <person name="Bajic V.B."/>
            <person name="Brenner S.E."/>
            <person name="Batalov S."/>
            <person name="Forrest A.R."/>
            <person name="Zavolan M."/>
            <person name="Davis M.J."/>
            <person name="Wilming L.G."/>
            <person name="Aidinis V."/>
            <person name="Allen J.E."/>
            <person name="Ambesi-Impiombato A."/>
            <person name="Apweiler R."/>
            <person name="Aturaliya R.N."/>
            <person name="Bailey T.L."/>
            <person name="Bansal M."/>
            <person name="Baxter L."/>
            <person name="Beisel K.W."/>
            <person name="Bersano T."/>
            <person name="Bono H."/>
            <person name="Chalk A.M."/>
            <person name="Chiu K.P."/>
            <person name="Choudhary V."/>
            <person name="Christoffels A."/>
            <person name="Clutterbuck D.R."/>
            <person name="Crowe M.L."/>
            <person name="Dalla E."/>
            <person name="Dalrymple B.P."/>
            <person name="de Bono B."/>
            <person name="Della Gatta G."/>
            <person name="di Bernardo D."/>
            <person name="Down T."/>
            <person name="Engstrom P."/>
            <person name="Fagiolini M."/>
            <person name="Faulkner G."/>
            <person name="Fletcher C.F."/>
            <person name="Fukushima T."/>
            <person name="Furuno M."/>
            <person name="Futaki S."/>
            <person name="Gariboldi M."/>
            <person name="Georgii-Hemming P."/>
            <person name="Gingeras T.R."/>
            <person name="Gojobori T."/>
            <person name="Green R.E."/>
            <person name="Gustincich S."/>
            <person name="Harbers M."/>
            <person name="Hayashi Y."/>
            <person name="Hensch T.K."/>
            <person name="Hirokawa N."/>
            <person name="Hill D."/>
            <person name="Huminiecki L."/>
            <person name="Iacono M."/>
            <person name="Ikeo K."/>
            <person name="Iwama A."/>
            <person name="Ishikawa T."/>
            <person name="Jakt M."/>
            <person name="Kanapin A."/>
            <person name="Katoh M."/>
            <person name="Kawasawa Y."/>
            <person name="Kelso J."/>
            <person name="Kitamura H."/>
            <person name="Kitano H."/>
            <person name="Kollias G."/>
            <person name="Krishnan S.P."/>
            <person name="Kruger A."/>
            <person name="Kummerfeld S.K."/>
            <person name="Kurochkin I.V."/>
            <person name="Lareau L.F."/>
            <person name="Lazarevic D."/>
            <person name="Lipovich L."/>
            <person name="Liu J."/>
            <person name="Liuni S."/>
            <person name="McWilliam S."/>
            <person name="Madan Babu M."/>
            <person name="Madera M."/>
            <person name="Marchionni L."/>
            <person name="Matsuda H."/>
            <person name="Matsuzawa S."/>
            <person name="Miki H."/>
            <person name="Mignone F."/>
            <person name="Miyake S."/>
            <person name="Morris K."/>
            <person name="Mottagui-Tabar S."/>
            <person name="Mulder N."/>
            <person name="Nakano N."/>
            <person name="Nakauchi H."/>
            <person name="Ng P."/>
            <person name="Nilsson R."/>
            <person name="Nishiguchi S."/>
            <person name="Nishikawa S."/>
            <person name="Nori F."/>
            <person name="Ohara O."/>
            <person name="Okazaki Y."/>
            <person name="Orlando V."/>
            <person name="Pang K.C."/>
            <person name="Pavan W.J."/>
            <person name="Pavesi G."/>
            <person name="Pesole G."/>
            <person name="Petrovsky N."/>
            <person name="Piazza S."/>
            <person name="Reed J."/>
            <person name="Reid J.F."/>
            <person name="Ring B.Z."/>
            <person name="Ringwald M."/>
            <person name="Rost B."/>
            <person name="Ruan Y."/>
            <person name="Salzberg S.L."/>
            <person name="Sandelin A."/>
            <person name="Schneider C."/>
            <person name="Schoenbach C."/>
            <person name="Sekiguchi K."/>
            <person name="Semple C.A."/>
            <person name="Seno S."/>
            <person name="Sessa L."/>
            <person name="Sheng Y."/>
            <person name="Shibata Y."/>
            <person name="Shimada H."/>
            <person name="Shimada K."/>
            <person name="Silva D."/>
            <person name="Sinclair B."/>
            <person name="Sperling S."/>
            <person name="Stupka E."/>
            <person name="Sugiura K."/>
            <person name="Sultana R."/>
            <person name="Takenaka Y."/>
            <person name="Taki K."/>
            <person name="Tammoja K."/>
            <person name="Tan S.L."/>
            <person name="Tang S."/>
            <person name="Taylor M.S."/>
            <person name="Tegner J."/>
            <person name="Teichmann S.A."/>
            <person name="Ueda H.R."/>
            <person name="van Nimwegen E."/>
            <person name="Verardo R."/>
            <person name="Wei C.L."/>
            <person name="Yagi K."/>
            <person name="Yamanishi H."/>
            <person name="Zabarovsky E."/>
            <person name="Zhu S."/>
            <person name="Zimmer A."/>
            <person name="Hide W."/>
            <person name="Bult C."/>
            <person name="Grimmond S.M."/>
            <person name="Teasdale R.D."/>
            <person name="Liu E.T."/>
            <person name="Brusic V."/>
            <person name="Quackenbush J."/>
            <person name="Wahlestedt C."/>
            <person name="Mattick J.S."/>
            <person name="Hume D.A."/>
            <person name="Kai C."/>
            <person name="Sasaki D."/>
            <person name="Tomaru Y."/>
            <person name="Fukuda S."/>
            <person name="Kanamori-Katayama M."/>
            <person name="Suzuki M."/>
            <person name="Aoki J."/>
            <person name="Arakawa T."/>
            <person name="Iida J."/>
            <person name="Imamura K."/>
            <person name="Itoh M."/>
            <person name="Kato T."/>
            <person name="Kawaji H."/>
            <person name="Kawagashira N."/>
            <person name="Kawashima T."/>
            <person name="Kojima M."/>
            <person name="Kondo S."/>
            <person name="Konno H."/>
            <person name="Nakano K."/>
            <person name="Ninomiya N."/>
            <person name="Nishio T."/>
            <person name="Okada M."/>
            <person name="Plessy C."/>
            <person name="Shibata K."/>
            <person name="Shiraki T."/>
            <person name="Suzuki S."/>
            <person name="Tagami M."/>
            <person name="Waki K."/>
            <person name="Watahiki A."/>
            <person name="Okamura-Oho Y."/>
            <person name="Suzuki H."/>
            <person name="Kawai J."/>
            <person name="Hayashizaki Y."/>
        </authorList>
    </citation>
    <scope>NUCLEOTIDE SEQUENCE [LARGE SCALE MRNA]</scope>
    <source>
        <strain>C57BL/6J</strain>
        <strain>NOD</strain>
        <tissue>Bone</tissue>
        <tissue>Bone marrow</tissue>
    </source>
</reference>
<reference key="2">
    <citation type="journal article" date="2010" name="Cell">
        <title>A tissue-specific atlas of mouse protein phosphorylation and expression.</title>
        <authorList>
            <person name="Huttlin E.L."/>
            <person name="Jedrychowski M.P."/>
            <person name="Elias J.E."/>
            <person name="Goswami T."/>
            <person name="Rad R."/>
            <person name="Beausoleil S.A."/>
            <person name="Villen J."/>
            <person name="Haas W."/>
            <person name="Sowa M.E."/>
            <person name="Gygi S.P."/>
        </authorList>
    </citation>
    <scope>IDENTIFICATION BY MASS SPECTROMETRY [LARGE SCALE ANALYSIS]</scope>
    <source>
        <tissue>Liver</tissue>
        <tissue>Spleen</tissue>
    </source>
</reference>
<accession>Q3TRM8</accession>
<accession>Q3TAX6</accession>
<accession>Q3UDP1</accession>
<accession>Q3UEA4</accession>
<feature type="chain" id="PRO_0000197591" description="Hexokinase-3">
    <location>
        <begin position="1"/>
        <end position="922"/>
    </location>
</feature>
<feature type="domain" description="Hexokinase 1" evidence="4">
    <location>
        <begin position="25"/>
        <end position="469"/>
    </location>
</feature>
<feature type="domain" description="Hexokinase 2" evidence="4">
    <location>
        <begin position="475"/>
        <end position="911"/>
    </location>
</feature>
<feature type="region of interest" description="Disordered" evidence="5">
    <location>
        <begin position="1"/>
        <end position="23"/>
    </location>
</feature>
<feature type="region of interest" description="Hexokinase small subdomain 1" evidence="4">
    <location>
        <begin position="82"/>
        <end position="218"/>
    </location>
</feature>
<feature type="region of interest" description="Hexokinase large subdomain 1" evidence="4">
    <location>
        <begin position="219"/>
        <end position="458"/>
    </location>
</feature>
<feature type="region of interest" description="Hexokinase small subdomain 2" evidence="4">
    <location>
        <begin position="529"/>
        <end position="660"/>
    </location>
</feature>
<feature type="region of interest" description="Hexokinase large subdomain 2" evidence="4">
    <location>
        <begin position="661"/>
        <end position="900"/>
    </location>
</feature>
<feature type="binding site" evidence="1">
    <location>
        <begin position="93"/>
        <end position="102"/>
    </location>
    <ligand>
        <name>D-glucose 6-phosphate</name>
        <dbReference type="ChEBI" id="CHEBI:61548"/>
        <label>1</label>
    </ligand>
</feature>
<feature type="binding site" evidence="1">
    <location>
        <begin position="93"/>
        <end position="100"/>
    </location>
    <ligand>
        <name>ATP</name>
        <dbReference type="ChEBI" id="CHEBI:30616"/>
        <label>1</label>
    </ligand>
</feature>
<feature type="binding site" evidence="1">
    <location>
        <position position="166"/>
    </location>
    <ligand>
        <name>D-glucose</name>
        <dbReference type="ChEBI" id="CHEBI:4167"/>
        <label>1</label>
    </ligand>
</feature>
<feature type="binding site" evidence="1">
    <location>
        <begin position="183"/>
        <end position="184"/>
    </location>
    <ligand>
        <name>D-glucose</name>
        <dbReference type="ChEBI" id="CHEBI:4167"/>
        <label>1</label>
    </ligand>
</feature>
<feature type="binding site" evidence="1">
    <location>
        <begin position="219"/>
        <end position="220"/>
    </location>
    <ligand>
        <name>D-glucose</name>
        <dbReference type="ChEBI" id="CHEBI:4167"/>
        <label>1</label>
    </ligand>
</feature>
<feature type="binding site" evidence="1">
    <location>
        <position position="220"/>
    </location>
    <ligand>
        <name>D-glucose 6-phosphate</name>
        <dbReference type="ChEBI" id="CHEBI:61548"/>
        <label>1</label>
    </ligand>
</feature>
<feature type="binding site" evidence="1">
    <location>
        <position position="243"/>
    </location>
    <ligand>
        <name>D-glucose 6-phosphate</name>
        <dbReference type="ChEBI" id="CHEBI:61548"/>
        <label>1</label>
    </ligand>
</feature>
<feature type="binding site" evidence="1">
    <location>
        <position position="246"/>
    </location>
    <ligand>
        <name>D-glucose</name>
        <dbReference type="ChEBI" id="CHEBI:4167"/>
        <label>1</label>
    </ligand>
</feature>
<feature type="binding site" evidence="1">
    <location>
        <position position="271"/>
    </location>
    <ligand>
        <name>D-glucose</name>
        <dbReference type="ChEBI" id="CHEBI:4167"/>
        <label>1</label>
    </ligand>
</feature>
<feature type="binding site" evidence="1">
    <location>
        <begin position="302"/>
        <end position="305"/>
    </location>
    <ligand>
        <name>D-glucose</name>
        <dbReference type="ChEBI" id="CHEBI:4167"/>
        <label>1</label>
    </ligand>
</feature>
<feature type="binding site" evidence="1">
    <location>
        <begin position="424"/>
        <end position="426"/>
    </location>
    <ligand>
        <name>D-glucose 6-phosphate</name>
        <dbReference type="ChEBI" id="CHEBI:61548"/>
        <label>1</label>
    </ligand>
</feature>
<feature type="binding site" evidence="1">
    <location>
        <begin position="436"/>
        <end position="437"/>
    </location>
    <ligand>
        <name>ATP</name>
        <dbReference type="ChEBI" id="CHEBI:30616"/>
        <label>1</label>
    </ligand>
</feature>
<feature type="binding site" evidence="1">
    <location>
        <begin position="540"/>
        <end position="545"/>
    </location>
    <ligand>
        <name>ATP</name>
        <dbReference type="ChEBI" id="CHEBI:30616"/>
        <label>2</label>
    </ligand>
</feature>
<feature type="binding site" evidence="1">
    <location>
        <begin position="540"/>
        <end position="544"/>
    </location>
    <ligand>
        <name>D-glucose 6-phosphate</name>
        <dbReference type="ChEBI" id="CHEBI:61548"/>
        <label>2</label>
    </ligand>
</feature>
<feature type="binding site" evidence="1">
    <location>
        <begin position="608"/>
        <end position="609"/>
    </location>
    <ligand>
        <name>D-glucose</name>
        <dbReference type="ChEBI" id="CHEBI:4167"/>
        <label>2</label>
    </ligand>
</feature>
<feature type="binding site" evidence="3">
    <location>
        <begin position="625"/>
        <end position="626"/>
    </location>
    <ligand>
        <name>D-glucose</name>
        <dbReference type="ChEBI" id="CHEBI:4167"/>
        <label>2</label>
    </ligand>
</feature>
<feature type="binding site" evidence="3">
    <location>
        <begin position="661"/>
        <end position="662"/>
    </location>
    <ligand>
        <name>D-glucose</name>
        <dbReference type="ChEBI" id="CHEBI:4167"/>
        <label>2</label>
    </ligand>
</feature>
<feature type="binding site" evidence="1">
    <location>
        <position position="662"/>
    </location>
    <ligand>
        <name>D-glucose 6-phosphate</name>
        <dbReference type="ChEBI" id="CHEBI:61548"/>
        <label>2</label>
    </ligand>
</feature>
<feature type="binding site" evidence="1">
    <location>
        <position position="685"/>
    </location>
    <ligand>
        <name>ATP</name>
        <dbReference type="ChEBI" id="CHEBI:30616"/>
        <label>2</label>
    </ligand>
</feature>
<feature type="binding site" evidence="1">
    <location>
        <position position="685"/>
    </location>
    <ligand>
        <name>D-glucose 6-phosphate</name>
        <dbReference type="ChEBI" id="CHEBI:61548"/>
        <label>2</label>
    </ligand>
</feature>
<feature type="binding site" evidence="3">
    <location>
        <begin position="687"/>
        <end position="688"/>
    </location>
    <ligand>
        <name>D-glucose</name>
        <dbReference type="ChEBI" id="CHEBI:4167"/>
        <label>2</label>
    </ligand>
</feature>
<feature type="binding site" evidence="3">
    <location>
        <position position="713"/>
    </location>
    <ligand>
        <name>D-glucose</name>
        <dbReference type="ChEBI" id="CHEBI:4167"/>
        <label>2</label>
    </ligand>
</feature>
<feature type="binding site" evidence="3">
    <location>
        <position position="747"/>
    </location>
    <ligand>
        <name>D-glucose</name>
        <dbReference type="ChEBI" id="CHEBI:4167"/>
        <label>2</label>
    </ligand>
</feature>
<feature type="binding site" evidence="1">
    <location>
        <begin position="752"/>
        <end position="753"/>
    </location>
    <ligand>
        <name>ATP</name>
        <dbReference type="ChEBI" id="CHEBI:30616"/>
        <label>2</label>
    </ligand>
</feature>
<feature type="binding site" evidence="1">
    <location>
        <begin position="789"/>
        <end position="793"/>
    </location>
    <ligand>
        <name>ATP</name>
        <dbReference type="ChEBI" id="CHEBI:30616"/>
        <label>2</label>
    </ligand>
</feature>
<feature type="binding site" evidence="1">
    <location>
        <begin position="866"/>
        <end position="868"/>
    </location>
    <ligand>
        <name>D-glucose 6-phosphate</name>
        <dbReference type="ChEBI" id="CHEBI:61548"/>
        <label>2</label>
    </ligand>
</feature>
<feature type="binding site" evidence="1">
    <location>
        <begin position="868"/>
        <end position="872"/>
    </location>
    <ligand>
        <name>ATP</name>
        <dbReference type="ChEBI" id="CHEBI:30616"/>
        <label>2</label>
    </ligand>
</feature>
<feature type="binding site" evidence="1">
    <location>
        <position position="902"/>
    </location>
    <ligand>
        <name>D-glucose 6-phosphate</name>
        <dbReference type="ChEBI" id="CHEBI:61548"/>
        <label>2</label>
    </ligand>
</feature>
<feature type="sequence conflict" description="In Ref. 1; BAE37000." evidence="6" ref="1">
    <original>A</original>
    <variation>S</variation>
    <location>
        <position position="203"/>
    </location>
</feature>
<feature type="sequence conflict" description="In Ref. 1; BAE29220." evidence="6" ref="1">
    <original>Y</original>
    <variation>C</variation>
    <location>
        <position position="384"/>
    </location>
</feature>
<feature type="sequence conflict" description="In Ref. 1; BAE29220." evidence="6" ref="1">
    <original>K</original>
    <variation>E</variation>
    <location>
        <position position="439"/>
    </location>
</feature>
<feature type="sequence conflict" description="In Ref. 1; BAE29007." evidence="6" ref="1">
    <original>V</original>
    <variation>I</variation>
    <location>
        <position position="442"/>
    </location>
</feature>
<feature type="sequence conflict" description="In Ref. 1; BAE29007." evidence="6" ref="1">
    <original>G</original>
    <variation>E</variation>
    <location>
        <position position="509"/>
    </location>
</feature>
<feature type="sequence conflict" description="In Ref. 1; BAE29007." evidence="6" ref="1">
    <original>T</original>
    <variation>A</variation>
    <location>
        <position position="860"/>
    </location>
</feature>
<proteinExistence type="evidence at protein level"/>
<keyword id="KW-0021">Allosteric enzyme</keyword>
<keyword id="KW-0067">ATP-binding</keyword>
<keyword id="KW-0324">Glycolysis</keyword>
<keyword id="KW-0418">Kinase</keyword>
<keyword id="KW-0547">Nucleotide-binding</keyword>
<keyword id="KW-1185">Reference proteome</keyword>
<keyword id="KW-0677">Repeat</keyword>
<keyword id="KW-0808">Transferase</keyword>
<protein>
    <recommendedName>
        <fullName evidence="6">Hexokinase-3</fullName>
        <ecNumber evidence="2">2.7.1.1</ecNumber>
    </recommendedName>
    <alternativeName>
        <fullName evidence="2">Hexokinase type III</fullName>
        <shortName evidence="2">HK III</shortName>
    </alternativeName>
    <alternativeName>
        <fullName evidence="2">Hexokinase-C</fullName>
    </alternativeName>
</protein>
<evidence type="ECO:0000250" key="1">
    <source>
        <dbReference type="UniProtKB" id="P19367"/>
    </source>
</evidence>
<evidence type="ECO:0000250" key="2">
    <source>
        <dbReference type="UniProtKB" id="P27926"/>
    </source>
</evidence>
<evidence type="ECO:0000250" key="3">
    <source>
        <dbReference type="UniProtKB" id="P52790"/>
    </source>
</evidence>
<evidence type="ECO:0000255" key="4">
    <source>
        <dbReference type="PROSITE-ProRule" id="PRU01084"/>
    </source>
</evidence>
<evidence type="ECO:0000256" key="5">
    <source>
        <dbReference type="SAM" id="MobiDB-lite"/>
    </source>
</evidence>
<evidence type="ECO:0000305" key="6"/>
<evidence type="ECO:0000312" key="7">
    <source>
        <dbReference type="MGI" id="MGI:2670962"/>
    </source>
</evidence>
<organism>
    <name type="scientific">Mus musculus</name>
    <name type="common">Mouse</name>
    <dbReference type="NCBI Taxonomy" id="10090"/>
    <lineage>
        <taxon>Eukaryota</taxon>
        <taxon>Metazoa</taxon>
        <taxon>Chordata</taxon>
        <taxon>Craniata</taxon>
        <taxon>Vertebrata</taxon>
        <taxon>Euteleostomi</taxon>
        <taxon>Mammalia</taxon>
        <taxon>Eutheria</taxon>
        <taxon>Euarchontoglires</taxon>
        <taxon>Glires</taxon>
        <taxon>Rodentia</taxon>
        <taxon>Myomorpha</taxon>
        <taxon>Muroidea</taxon>
        <taxon>Muridae</taxon>
        <taxon>Murinae</taxon>
        <taxon>Mus</taxon>
        <taxon>Mus</taxon>
    </lineage>
</organism>